<protein>
    <recommendedName>
        <fullName evidence="1">Probable 2-oxoadipate dehydrogenase complex component E1 homolog</fullName>
        <ecNumber evidence="1">1.2.4.-</ecNumber>
    </recommendedName>
    <alternativeName>
        <fullName>Oxoglutarate dehydrogenase A</fullName>
    </alternativeName>
</protein>
<proteinExistence type="inferred from homology"/>
<evidence type="ECO:0000250" key="1">
    <source>
        <dbReference type="UniProtKB" id="Q96HY7"/>
    </source>
</evidence>
<evidence type="ECO:0000255" key="2"/>
<evidence type="ECO:0000305" key="3"/>
<evidence type="ECO:0000312" key="4">
    <source>
        <dbReference type="Proteomes" id="UP000002195"/>
    </source>
</evidence>
<keyword id="KW-0324">Glycolysis</keyword>
<keyword id="KW-0496">Mitochondrion</keyword>
<keyword id="KW-0560">Oxidoreductase</keyword>
<keyword id="KW-1185">Reference proteome</keyword>
<keyword id="KW-0786">Thiamine pyrophosphate</keyword>
<keyword id="KW-0809">Transit peptide</keyword>
<dbReference type="EC" id="1.2.4.-" evidence="1"/>
<dbReference type="EMBL" id="AAFI02000035">
    <property type="protein sequence ID" value="EAL67403.1"/>
    <property type="molecule type" value="Genomic_DNA"/>
</dbReference>
<dbReference type="RefSeq" id="XP_641395.1">
    <property type="nucleotide sequence ID" value="XM_636303.1"/>
</dbReference>
<dbReference type="SMR" id="Q54VG0"/>
<dbReference type="FunCoup" id="Q54VG0">
    <property type="interactions" value="20"/>
</dbReference>
<dbReference type="STRING" id="44689.Q54VG0"/>
<dbReference type="PaxDb" id="44689-DDB0230197"/>
<dbReference type="EnsemblProtists" id="EAL67403">
    <property type="protein sequence ID" value="EAL67403"/>
    <property type="gene ID" value="DDB_G0280353"/>
</dbReference>
<dbReference type="GeneID" id="8622529"/>
<dbReference type="KEGG" id="ddi:DDB_G0280353"/>
<dbReference type="dictyBase" id="DDB_G0280353">
    <property type="gene designation" value="odhA"/>
</dbReference>
<dbReference type="VEuPathDB" id="AmoebaDB:DDB_G0280353"/>
<dbReference type="eggNOG" id="KOG0451">
    <property type="taxonomic scope" value="Eukaryota"/>
</dbReference>
<dbReference type="HOGENOM" id="CLU_004709_1_0_1"/>
<dbReference type="InParanoid" id="Q54VG0"/>
<dbReference type="OMA" id="PAQYYHV"/>
<dbReference type="PhylomeDB" id="Q54VG0"/>
<dbReference type="Reactome" id="R-DDI-9858328">
    <property type="pathway name" value="OADH complex synthesizes glutaryl-CoA from 2-OA"/>
</dbReference>
<dbReference type="PRO" id="PR:Q54VG0"/>
<dbReference type="Proteomes" id="UP000002195">
    <property type="component" value="Chromosome 3"/>
</dbReference>
<dbReference type="GO" id="GO:0005739">
    <property type="term" value="C:mitochondrion"/>
    <property type="evidence" value="ECO:0007669"/>
    <property type="project" value="UniProtKB-SubCell"/>
</dbReference>
<dbReference type="GO" id="GO:0160166">
    <property type="term" value="F:2-oxoadipate dehydrogenase activity"/>
    <property type="evidence" value="ECO:0007669"/>
    <property type="project" value="RHEA"/>
</dbReference>
<dbReference type="GO" id="GO:0004591">
    <property type="term" value="F:oxoglutarate dehydrogenase (succinyl-transferring) activity"/>
    <property type="evidence" value="ECO:0000305"/>
    <property type="project" value="dictyBase"/>
</dbReference>
<dbReference type="GO" id="GO:0030976">
    <property type="term" value="F:thiamine pyrophosphate binding"/>
    <property type="evidence" value="ECO:0007669"/>
    <property type="project" value="InterPro"/>
</dbReference>
<dbReference type="GO" id="GO:0006096">
    <property type="term" value="P:glycolytic process"/>
    <property type="evidence" value="ECO:0007669"/>
    <property type="project" value="UniProtKB-KW"/>
</dbReference>
<dbReference type="CDD" id="cd02016">
    <property type="entry name" value="TPP_E1_OGDC_like"/>
    <property type="match status" value="1"/>
</dbReference>
<dbReference type="FunFam" id="3.40.50.970:FF:000179">
    <property type="entry name" value="Probable 2-oxoglutarate dehydrogenase E1 component DHKTD1 homolog, mitochondrial"/>
    <property type="match status" value="1"/>
</dbReference>
<dbReference type="Gene3D" id="3.40.50.12470">
    <property type="match status" value="1"/>
</dbReference>
<dbReference type="Gene3D" id="3.40.50.970">
    <property type="match status" value="1"/>
</dbReference>
<dbReference type="Gene3D" id="3.40.50.11610">
    <property type="entry name" value="Multifunctional 2-oxoglutarate metabolism enzyme, C-terminal domain"/>
    <property type="match status" value="1"/>
</dbReference>
<dbReference type="Gene3D" id="1.10.287.1150">
    <property type="entry name" value="TPP helical domain"/>
    <property type="match status" value="1"/>
</dbReference>
<dbReference type="InterPro" id="IPR011603">
    <property type="entry name" value="2oxoglutarate_DH_E1"/>
</dbReference>
<dbReference type="InterPro" id="IPR001017">
    <property type="entry name" value="DH_E1"/>
</dbReference>
<dbReference type="InterPro" id="IPR042179">
    <property type="entry name" value="KGD_C_sf"/>
</dbReference>
<dbReference type="InterPro" id="IPR031717">
    <property type="entry name" value="ODO-1/KGD_C"/>
</dbReference>
<dbReference type="InterPro" id="IPR029061">
    <property type="entry name" value="THDP-binding"/>
</dbReference>
<dbReference type="InterPro" id="IPR005475">
    <property type="entry name" value="Transketolase-like_Pyr-bd"/>
</dbReference>
<dbReference type="NCBIfam" id="TIGR00239">
    <property type="entry name" value="2oxo_dh_E1"/>
    <property type="match status" value="1"/>
</dbReference>
<dbReference type="NCBIfam" id="NF006914">
    <property type="entry name" value="PRK09404.1"/>
    <property type="match status" value="1"/>
</dbReference>
<dbReference type="NCBIfam" id="NF008907">
    <property type="entry name" value="PRK12270.1"/>
    <property type="match status" value="1"/>
</dbReference>
<dbReference type="PANTHER" id="PTHR23152:SF4">
    <property type="entry name" value="2-OXOADIPATE DEHYDROGENASE COMPLEX COMPONENT E1"/>
    <property type="match status" value="1"/>
</dbReference>
<dbReference type="PANTHER" id="PTHR23152">
    <property type="entry name" value="2-OXOGLUTARATE DEHYDROGENASE"/>
    <property type="match status" value="1"/>
</dbReference>
<dbReference type="Pfam" id="PF00676">
    <property type="entry name" value="E1_dh"/>
    <property type="match status" value="1"/>
</dbReference>
<dbReference type="Pfam" id="PF16870">
    <property type="entry name" value="OxoGdeHyase_C"/>
    <property type="match status" value="1"/>
</dbReference>
<dbReference type="Pfam" id="PF02779">
    <property type="entry name" value="Transket_pyr"/>
    <property type="match status" value="1"/>
</dbReference>
<dbReference type="PIRSF" id="PIRSF000157">
    <property type="entry name" value="Oxoglu_dh_E1"/>
    <property type="match status" value="1"/>
</dbReference>
<dbReference type="SMART" id="SM00861">
    <property type="entry name" value="Transket_pyr"/>
    <property type="match status" value="1"/>
</dbReference>
<dbReference type="SUPFAM" id="SSF52518">
    <property type="entry name" value="Thiamin diphosphate-binding fold (THDP-binding)"/>
    <property type="match status" value="2"/>
</dbReference>
<feature type="transit peptide" description="Mitochondrion" evidence="2">
    <location>
        <begin position="1"/>
        <end status="unknown"/>
    </location>
</feature>
<feature type="chain" id="PRO_0000388782" description="Probable 2-oxoadipate dehydrogenase complex component E1 homolog">
    <location>
        <begin status="unknown"/>
        <end position="900"/>
    </location>
</feature>
<name>DHTK1_DICDI</name>
<reference key="1">
    <citation type="journal article" date="2005" name="Nature">
        <title>The genome of the social amoeba Dictyostelium discoideum.</title>
        <authorList>
            <person name="Eichinger L."/>
            <person name="Pachebat J.A."/>
            <person name="Gloeckner G."/>
            <person name="Rajandream M.A."/>
            <person name="Sucgang R."/>
            <person name="Berriman M."/>
            <person name="Song J."/>
            <person name="Olsen R."/>
            <person name="Szafranski K."/>
            <person name="Xu Q."/>
            <person name="Tunggal B."/>
            <person name="Kummerfeld S."/>
            <person name="Madera M."/>
            <person name="Konfortov B.A."/>
            <person name="Rivero F."/>
            <person name="Bankier A.T."/>
            <person name="Lehmann R."/>
            <person name="Hamlin N."/>
            <person name="Davies R."/>
            <person name="Gaudet P."/>
            <person name="Fey P."/>
            <person name="Pilcher K."/>
            <person name="Chen G."/>
            <person name="Saunders D."/>
            <person name="Sodergren E.J."/>
            <person name="Davis P."/>
            <person name="Kerhornou A."/>
            <person name="Nie X."/>
            <person name="Hall N."/>
            <person name="Anjard C."/>
            <person name="Hemphill L."/>
            <person name="Bason N."/>
            <person name="Farbrother P."/>
            <person name="Desany B."/>
            <person name="Just E."/>
            <person name="Morio T."/>
            <person name="Rost R."/>
            <person name="Churcher C.M."/>
            <person name="Cooper J."/>
            <person name="Haydock S."/>
            <person name="van Driessche N."/>
            <person name="Cronin A."/>
            <person name="Goodhead I."/>
            <person name="Muzny D.M."/>
            <person name="Mourier T."/>
            <person name="Pain A."/>
            <person name="Lu M."/>
            <person name="Harper D."/>
            <person name="Lindsay R."/>
            <person name="Hauser H."/>
            <person name="James K.D."/>
            <person name="Quiles M."/>
            <person name="Madan Babu M."/>
            <person name="Saito T."/>
            <person name="Buchrieser C."/>
            <person name="Wardroper A."/>
            <person name="Felder M."/>
            <person name="Thangavelu M."/>
            <person name="Johnson D."/>
            <person name="Knights A."/>
            <person name="Loulseged H."/>
            <person name="Mungall K.L."/>
            <person name="Oliver K."/>
            <person name="Price C."/>
            <person name="Quail M.A."/>
            <person name="Urushihara H."/>
            <person name="Hernandez J."/>
            <person name="Rabbinowitsch E."/>
            <person name="Steffen D."/>
            <person name="Sanders M."/>
            <person name="Ma J."/>
            <person name="Kohara Y."/>
            <person name="Sharp S."/>
            <person name="Simmonds M.N."/>
            <person name="Spiegler S."/>
            <person name="Tivey A."/>
            <person name="Sugano S."/>
            <person name="White B."/>
            <person name="Walker D."/>
            <person name="Woodward J.R."/>
            <person name="Winckler T."/>
            <person name="Tanaka Y."/>
            <person name="Shaulsky G."/>
            <person name="Schleicher M."/>
            <person name="Weinstock G.M."/>
            <person name="Rosenthal A."/>
            <person name="Cox E.C."/>
            <person name="Chisholm R.L."/>
            <person name="Gibbs R.A."/>
            <person name="Loomis W.F."/>
            <person name="Platzer M."/>
            <person name="Kay R.R."/>
            <person name="Williams J.G."/>
            <person name="Dear P.H."/>
            <person name="Noegel A.A."/>
            <person name="Barrell B.G."/>
            <person name="Kuspa A."/>
        </authorList>
    </citation>
    <scope>NUCLEOTIDE SEQUENCE [LARGE SCALE GENOMIC DNA]</scope>
    <source>
        <strain>AX4</strain>
    </source>
</reference>
<accession>Q54VG0</accession>
<gene>
    <name type="primary">odhA</name>
    <name type="ORF">DDB_G0280353</name>
</gene>
<organism evidence="4">
    <name type="scientific">Dictyostelium discoideum</name>
    <name type="common">Social amoeba</name>
    <dbReference type="NCBI Taxonomy" id="44689"/>
    <lineage>
        <taxon>Eukaryota</taxon>
        <taxon>Amoebozoa</taxon>
        <taxon>Evosea</taxon>
        <taxon>Eumycetozoa</taxon>
        <taxon>Dictyostelia</taxon>
        <taxon>Dictyosteliales</taxon>
        <taxon>Dictyosteliaceae</taxon>
        <taxon>Dictyostelium</taxon>
    </lineage>
</organism>
<sequence length="900" mass="101831">MIGLRSISKNKQTINSISKSFYCTSSPSSSSVKLSVTRLIDGYRAHGHLAANIDPLARMERIRSQLLDLDRYNLVKGQSIPSTIDLINQDLTNLDQVVSFLENAYCNDVTAQFDHIESIEEKAWLYEKFEQLQHQNPSKSEKINILKNLIKSEIFDQFMQKKFPTFKRYGLEGNESMMVSCDSIFRESAKNQLKNVVIGMPHRGRLNLLVQMCNYPAKDFFWKVKGNSEFSEGILGVGDVTSHIAVSTDLQFNNNKESVHVSLIHNPSHLEAVDPVAAGKTRAKQFYEKNEGGSESLCLMLHGDAAVAGQGVVTETLQLSQLSGFNIGGCVHVIVNNQIGFTTVPTNGRSNRYSSDIGKFIGAPIIVVNSQSPEQVEKVSRLAVEYRQKFKKDIIIDLIGWRKFGHNEVDEPSFTQPTMYQNIRKRQSIPQKYATQIISQGIFSEQELLEFTQKEQAILEEQFQLSTPENFKYSPMDHLQGKWSGLIQSKHIADDSKLDTGYSVEELSEIANDSVKVPSDFQVHQRLLRSFSNARLEKLKQNQADWATAESMAVGSLMKQGYNVRISGQDVGRGTFSQRHFNLTEQNSDRIYQPLNNMGAKGELDVVNSNLSEFAVLCYEYGYSLESPDTLPIWEAQFGDFINGAQIAIDQFVTSGESKWLRQSGIVILLPHGFDGAGPEHSSCRIERFLQLSDTEAVNVKDDTLINQETNFYFINPSTPANYFHALRRQMIRNYRKPLIVAGPKVLLRHPNCFSTLNEMAPGTHFQTVLSDPDTINNASTIKRVIFCSGKVFYDLQEERKAKNFNDVAIIRLEQIAPFPYQRIQEEINRYSNATKFAWVQEEQQNGGCWSFVEPRFKQRYPQTSQIKYIGRPPLAASAIGISSIHKKEVSQLLIDAFNF</sequence>
<comment type="function">
    <text evidence="1">2-oxoadipate dehydrogenase (E1a) component of the 2-oxoadipate dehydrogenase complex (OADHC). Participates in the first step, rate limiting for the overall conversion of 2-oxoadipate (alpha-ketoadipate) to glutaryl-CoA and CO(2) catalyzed by the whole OADHC. Catalyzes the irreversible decarboxylation of 2-oxoadipate via the thiamine diphosphate (ThDP) cofactor and subsequent transfer of the decarboxylated acyl intermediate on an oxidized dihydrolipoyl group that is covalently amidated to the E2 enzyme (dihydrolipoyllysine-residue succinyltransferase or DLST).</text>
</comment>
<comment type="catalytic activity">
    <reaction evidence="1">
        <text>N(6)-[(R)-lipoyl]-L-lysyl-[protein] + 2-oxoadipate + H(+) = N(6)-[(R)-S(8)-glutaryldihydrolipoyl]-L-lysyl-[protein] + CO2</text>
        <dbReference type="Rhea" id="RHEA:69576"/>
        <dbReference type="Rhea" id="RHEA-COMP:10474"/>
        <dbReference type="Rhea" id="RHEA-COMP:20093"/>
        <dbReference type="ChEBI" id="CHEBI:15378"/>
        <dbReference type="ChEBI" id="CHEBI:16526"/>
        <dbReference type="ChEBI" id="CHEBI:57499"/>
        <dbReference type="ChEBI" id="CHEBI:83099"/>
        <dbReference type="ChEBI" id="CHEBI:184385"/>
    </reaction>
    <physiologicalReaction direction="left-to-right" evidence="1">
        <dbReference type="Rhea" id="RHEA:69577"/>
    </physiologicalReaction>
</comment>
<comment type="cofactor">
    <cofactor evidence="1">
        <name>thiamine diphosphate</name>
        <dbReference type="ChEBI" id="CHEBI:58937"/>
    </cofactor>
</comment>
<comment type="subcellular location">
    <subcellularLocation>
        <location evidence="1">Mitochondrion</location>
    </subcellularLocation>
</comment>
<comment type="similarity">
    <text evidence="3">Belongs to the alpha-ketoglutarate dehydrogenase family.</text>
</comment>